<proteinExistence type="evidence at protein level"/>
<protein>
    <recommendedName>
        <fullName>Sulfite reductase [NADPH] hemoprotein beta-component</fullName>
        <shortName>SiR-HP</shortName>
        <shortName>SiRHP</shortName>
        <ecNumber>1.8.1.2</ecNumber>
    </recommendedName>
</protein>
<evidence type="ECO:0000250" key="1"/>
<evidence type="ECO:0000269" key="2">
    <source>
    </source>
</evidence>
<evidence type="ECO:0000269" key="3">
    <source>
    </source>
</evidence>
<evidence type="ECO:0000305" key="4"/>
<evidence type="ECO:0000305" key="5">
    <source>
    </source>
</evidence>
<name>CYSI_BACSU</name>
<gene>
    <name type="primary">cysI</name>
    <name type="synonym">yvgQ</name>
    <name type="ordered locus">BSU33430</name>
</gene>
<dbReference type="EC" id="1.8.1.2"/>
<dbReference type="EMBL" id="AL009126">
    <property type="protein sequence ID" value="CAB15348.1"/>
    <property type="molecule type" value="Genomic_DNA"/>
</dbReference>
<dbReference type="PIR" id="F70040">
    <property type="entry name" value="F70040"/>
</dbReference>
<dbReference type="RefSeq" id="NP_391223.1">
    <property type="nucleotide sequence ID" value="NC_000964.3"/>
</dbReference>
<dbReference type="RefSeq" id="WP_003243849.1">
    <property type="nucleotide sequence ID" value="NZ_OZ025638.1"/>
</dbReference>
<dbReference type="SMR" id="O32213"/>
<dbReference type="FunCoup" id="O32213">
    <property type="interactions" value="346"/>
</dbReference>
<dbReference type="IntAct" id="O32213">
    <property type="interactions" value="1"/>
</dbReference>
<dbReference type="MINT" id="O32213"/>
<dbReference type="STRING" id="224308.BSU33430"/>
<dbReference type="PaxDb" id="224308-BSU33430"/>
<dbReference type="EnsemblBacteria" id="CAB15348">
    <property type="protein sequence ID" value="CAB15348"/>
    <property type="gene ID" value="BSU_33430"/>
</dbReference>
<dbReference type="GeneID" id="938605"/>
<dbReference type="KEGG" id="bsu:BSU33430"/>
<dbReference type="PATRIC" id="fig|224308.179.peg.3628"/>
<dbReference type="eggNOG" id="COG0155">
    <property type="taxonomic scope" value="Bacteria"/>
</dbReference>
<dbReference type="InParanoid" id="O32213"/>
<dbReference type="OrthoDB" id="9803707at2"/>
<dbReference type="PhylomeDB" id="O32213"/>
<dbReference type="BioCyc" id="BSUB:BSU33430-MONOMER"/>
<dbReference type="UniPathway" id="UPA00140">
    <property type="reaction ID" value="UER00207"/>
</dbReference>
<dbReference type="Proteomes" id="UP000001570">
    <property type="component" value="Chromosome"/>
</dbReference>
<dbReference type="GO" id="GO:0009337">
    <property type="term" value="C:sulfite reductase complex (NADPH)"/>
    <property type="evidence" value="ECO:0007669"/>
    <property type="project" value="InterPro"/>
</dbReference>
<dbReference type="GO" id="GO:0051539">
    <property type="term" value="F:4 iron, 4 sulfur cluster binding"/>
    <property type="evidence" value="ECO:0007669"/>
    <property type="project" value="UniProtKB-KW"/>
</dbReference>
<dbReference type="GO" id="GO:0020037">
    <property type="term" value="F:heme binding"/>
    <property type="evidence" value="ECO:0007669"/>
    <property type="project" value="InterPro"/>
</dbReference>
<dbReference type="GO" id="GO:0046872">
    <property type="term" value="F:metal ion binding"/>
    <property type="evidence" value="ECO:0007669"/>
    <property type="project" value="UniProtKB-KW"/>
</dbReference>
<dbReference type="GO" id="GO:0050661">
    <property type="term" value="F:NADP binding"/>
    <property type="evidence" value="ECO:0007669"/>
    <property type="project" value="InterPro"/>
</dbReference>
<dbReference type="GO" id="GO:0004783">
    <property type="term" value="F:sulfite reductase (NADPH) activity"/>
    <property type="evidence" value="ECO:0007669"/>
    <property type="project" value="UniProtKB-UniRule"/>
</dbReference>
<dbReference type="GO" id="GO:0019344">
    <property type="term" value="P:cysteine biosynthetic process"/>
    <property type="evidence" value="ECO:0007669"/>
    <property type="project" value="UniProtKB-KW"/>
</dbReference>
<dbReference type="GO" id="GO:0070814">
    <property type="term" value="P:hydrogen sulfide biosynthetic process"/>
    <property type="evidence" value="ECO:0007669"/>
    <property type="project" value="UniProtKB-UniRule"/>
</dbReference>
<dbReference type="GO" id="GO:0000103">
    <property type="term" value="P:sulfate assimilation"/>
    <property type="evidence" value="ECO:0000318"/>
    <property type="project" value="GO_Central"/>
</dbReference>
<dbReference type="FunFam" id="3.30.413.10:FF:000003">
    <property type="entry name" value="Sulfite reductase [NADPH] hemoprotein beta-component"/>
    <property type="match status" value="1"/>
</dbReference>
<dbReference type="FunFam" id="3.30.413.10:FF:000004">
    <property type="entry name" value="Sulfite reductase [NADPH] hemoprotein beta-component"/>
    <property type="match status" value="1"/>
</dbReference>
<dbReference type="Gene3D" id="3.30.413.10">
    <property type="entry name" value="Sulfite Reductase Hemoprotein, domain 1"/>
    <property type="match status" value="2"/>
</dbReference>
<dbReference type="HAMAP" id="MF_01540">
    <property type="entry name" value="CysI"/>
    <property type="match status" value="1"/>
</dbReference>
<dbReference type="InterPro" id="IPR011786">
    <property type="entry name" value="CysI"/>
</dbReference>
<dbReference type="InterPro" id="IPR005117">
    <property type="entry name" value="NiRdtase/SiRdtase_haem-b_fer"/>
</dbReference>
<dbReference type="InterPro" id="IPR036136">
    <property type="entry name" value="Nit/Sulf_reduc_fer-like_dom_sf"/>
</dbReference>
<dbReference type="InterPro" id="IPR006067">
    <property type="entry name" value="NO2/SO3_Rdtase_4Fe4S_dom"/>
</dbReference>
<dbReference type="InterPro" id="IPR045169">
    <property type="entry name" value="NO2/SO3_Rdtase_4Fe4S_prot"/>
</dbReference>
<dbReference type="InterPro" id="IPR045854">
    <property type="entry name" value="NO2/SO3_Rdtase_4Fe4S_sf"/>
</dbReference>
<dbReference type="InterPro" id="IPR006066">
    <property type="entry name" value="NO2/SO3_Rdtase_FeS/sirohaem_BS"/>
</dbReference>
<dbReference type="NCBIfam" id="TIGR02041">
    <property type="entry name" value="CysI"/>
    <property type="match status" value="1"/>
</dbReference>
<dbReference type="NCBIfam" id="NF010029">
    <property type="entry name" value="PRK13504.1"/>
    <property type="match status" value="1"/>
</dbReference>
<dbReference type="PANTHER" id="PTHR11493:SF47">
    <property type="entry name" value="SULFITE REDUCTASE [NADPH] SUBUNIT BETA"/>
    <property type="match status" value="1"/>
</dbReference>
<dbReference type="PANTHER" id="PTHR11493">
    <property type="entry name" value="SULFITE REDUCTASE [NADPH] SUBUNIT BETA-RELATED"/>
    <property type="match status" value="1"/>
</dbReference>
<dbReference type="Pfam" id="PF01077">
    <property type="entry name" value="NIR_SIR"/>
    <property type="match status" value="1"/>
</dbReference>
<dbReference type="Pfam" id="PF03460">
    <property type="entry name" value="NIR_SIR_ferr"/>
    <property type="match status" value="2"/>
</dbReference>
<dbReference type="PRINTS" id="PR00397">
    <property type="entry name" value="SIROHAEM"/>
</dbReference>
<dbReference type="SUPFAM" id="SSF56014">
    <property type="entry name" value="Nitrite and sulphite reductase 4Fe-4S domain-like"/>
    <property type="match status" value="2"/>
</dbReference>
<dbReference type="SUPFAM" id="SSF55124">
    <property type="entry name" value="Nitrite/Sulfite reductase N-terminal domain-like"/>
    <property type="match status" value="2"/>
</dbReference>
<dbReference type="PROSITE" id="PS00365">
    <property type="entry name" value="NIR_SIR"/>
    <property type="match status" value="1"/>
</dbReference>
<sequence length="571" mass="64810">MVTKILKAPDGSPSDVERIKKESDYLRGTLKEVMLDRISAGIPDDDNRLMKHHGSYLQDDRDLRNERQKQKLEPAYQFMLRVRMPGGVSTPEQWLVMDDLSQKYGNGTLKLTTRETFQMHGILKWNMKKTIQTIHSALLDTIAACGDVNRNVMCASNPYQSEIHSEVYEWSKKLSDDLLPRTRAYHEIWLDEERVAGTPEEEVEPMYGPLYLPRKFKIGIAVPPSNDIDVFSQDLGFIAIVEDGKLIGFNVAIGGGMGMTHGDTATYPQLAKVIGFCRPEQMYDVAEKTITIQRDYGNRSVRKNARFKYTVDRLGLENVKEELENRLGWSLEEAKPYHFDHNGDRYGWVEGIEDKWHFTLFVEGGRITDYDDYKLMTGLREIAKVHTGEFRLTANQNLMIANVSSDKKEEISALIEQYGLTDGKHYSALRRSSMACVALPTCGLAMAEAERYLPTLLDKIEEIIDENGLRDQEITIRMTGCPNGCARHALGEIGFIGKAPGKYNMYLGAAFDGSRLSKMYRENIGEADILSELRILLSRYAKEREEGEHFGDFVIRAGIIKATTDGTNFHD</sequence>
<comment type="function">
    <text evidence="5">Component of the sulfite reductase complex that catalyzes the 6-electron reduction of sulfite to sulfide. This is one of several activities required for the biosynthesis of L-cysteine from sulfate (Probable).</text>
</comment>
<comment type="catalytic activity">
    <reaction>
        <text>hydrogen sulfide + 3 NADP(+) + 3 H2O = sulfite + 3 NADPH + 4 H(+)</text>
        <dbReference type="Rhea" id="RHEA:13801"/>
        <dbReference type="ChEBI" id="CHEBI:15377"/>
        <dbReference type="ChEBI" id="CHEBI:15378"/>
        <dbReference type="ChEBI" id="CHEBI:17359"/>
        <dbReference type="ChEBI" id="CHEBI:29919"/>
        <dbReference type="ChEBI" id="CHEBI:57783"/>
        <dbReference type="ChEBI" id="CHEBI:58349"/>
        <dbReference type="EC" id="1.8.1.2"/>
    </reaction>
</comment>
<comment type="cofactor">
    <cofactor evidence="1">
        <name>siroheme</name>
        <dbReference type="ChEBI" id="CHEBI:60052"/>
    </cofactor>
    <text evidence="1">Binds 1 siroheme per subunit.</text>
</comment>
<comment type="cofactor">
    <cofactor evidence="1">
        <name>[4Fe-4S] cluster</name>
        <dbReference type="ChEBI" id="CHEBI:49883"/>
    </cofactor>
    <text evidence="1">Binds 1 [4Fe-4S] cluster per subunit.</text>
</comment>
<comment type="pathway">
    <text>Sulfur metabolism; hydrogen sulfide biosynthesis; hydrogen sulfide from sulfite (NADPH route): step 1/1.</text>
</comment>
<comment type="subunit">
    <text evidence="1">Alpha(8)-beta(8). The alpha component is a flavoprotein, the beta component is a hemoprotein (By similarity).</text>
</comment>
<comment type="induction">
    <text evidence="2 3">Up-regulated by sulfate and the transcriptional regulator CysL.</text>
</comment>
<comment type="disruption phenotype">
    <text evidence="2">Cells lacking the cysIJ genes are unable to use sulfate, sulfite or butanesulfonate as sole sulfur source, grow poorly with sulfide, but can still grow with thiosulfate, cysteine or methionine.</text>
</comment>
<comment type="similarity">
    <text evidence="4">Belongs to the nitrite and sulfite reductase 4Fe-4S domain family.</text>
</comment>
<organism>
    <name type="scientific">Bacillus subtilis (strain 168)</name>
    <dbReference type="NCBI Taxonomy" id="224308"/>
    <lineage>
        <taxon>Bacteria</taxon>
        <taxon>Bacillati</taxon>
        <taxon>Bacillota</taxon>
        <taxon>Bacilli</taxon>
        <taxon>Bacillales</taxon>
        <taxon>Bacillaceae</taxon>
        <taxon>Bacillus</taxon>
    </lineage>
</organism>
<reference key="1">
    <citation type="journal article" date="1997" name="Nature">
        <title>The complete genome sequence of the Gram-positive bacterium Bacillus subtilis.</title>
        <authorList>
            <person name="Kunst F."/>
            <person name="Ogasawara N."/>
            <person name="Moszer I."/>
            <person name="Albertini A.M."/>
            <person name="Alloni G."/>
            <person name="Azevedo V."/>
            <person name="Bertero M.G."/>
            <person name="Bessieres P."/>
            <person name="Bolotin A."/>
            <person name="Borchert S."/>
            <person name="Borriss R."/>
            <person name="Boursier L."/>
            <person name="Brans A."/>
            <person name="Braun M."/>
            <person name="Brignell S.C."/>
            <person name="Bron S."/>
            <person name="Brouillet S."/>
            <person name="Bruschi C.V."/>
            <person name="Caldwell B."/>
            <person name="Capuano V."/>
            <person name="Carter N.M."/>
            <person name="Choi S.-K."/>
            <person name="Codani J.-J."/>
            <person name="Connerton I.F."/>
            <person name="Cummings N.J."/>
            <person name="Daniel R.A."/>
            <person name="Denizot F."/>
            <person name="Devine K.M."/>
            <person name="Duesterhoeft A."/>
            <person name="Ehrlich S.D."/>
            <person name="Emmerson P.T."/>
            <person name="Entian K.-D."/>
            <person name="Errington J."/>
            <person name="Fabret C."/>
            <person name="Ferrari E."/>
            <person name="Foulger D."/>
            <person name="Fritz C."/>
            <person name="Fujita M."/>
            <person name="Fujita Y."/>
            <person name="Fuma S."/>
            <person name="Galizzi A."/>
            <person name="Galleron N."/>
            <person name="Ghim S.-Y."/>
            <person name="Glaser P."/>
            <person name="Goffeau A."/>
            <person name="Golightly E.J."/>
            <person name="Grandi G."/>
            <person name="Guiseppi G."/>
            <person name="Guy B.J."/>
            <person name="Haga K."/>
            <person name="Haiech J."/>
            <person name="Harwood C.R."/>
            <person name="Henaut A."/>
            <person name="Hilbert H."/>
            <person name="Holsappel S."/>
            <person name="Hosono S."/>
            <person name="Hullo M.-F."/>
            <person name="Itaya M."/>
            <person name="Jones L.-M."/>
            <person name="Joris B."/>
            <person name="Karamata D."/>
            <person name="Kasahara Y."/>
            <person name="Klaerr-Blanchard M."/>
            <person name="Klein C."/>
            <person name="Kobayashi Y."/>
            <person name="Koetter P."/>
            <person name="Koningstein G."/>
            <person name="Krogh S."/>
            <person name="Kumano M."/>
            <person name="Kurita K."/>
            <person name="Lapidus A."/>
            <person name="Lardinois S."/>
            <person name="Lauber J."/>
            <person name="Lazarevic V."/>
            <person name="Lee S.-M."/>
            <person name="Levine A."/>
            <person name="Liu H."/>
            <person name="Masuda S."/>
            <person name="Mauel C."/>
            <person name="Medigue C."/>
            <person name="Medina N."/>
            <person name="Mellado R.P."/>
            <person name="Mizuno M."/>
            <person name="Moestl D."/>
            <person name="Nakai S."/>
            <person name="Noback M."/>
            <person name="Noone D."/>
            <person name="O'Reilly M."/>
            <person name="Ogawa K."/>
            <person name="Ogiwara A."/>
            <person name="Oudega B."/>
            <person name="Park S.-H."/>
            <person name="Parro V."/>
            <person name="Pohl T.M."/>
            <person name="Portetelle D."/>
            <person name="Porwollik S."/>
            <person name="Prescott A.M."/>
            <person name="Presecan E."/>
            <person name="Pujic P."/>
            <person name="Purnelle B."/>
            <person name="Rapoport G."/>
            <person name="Rey M."/>
            <person name="Reynolds S."/>
            <person name="Rieger M."/>
            <person name="Rivolta C."/>
            <person name="Rocha E."/>
            <person name="Roche B."/>
            <person name="Rose M."/>
            <person name="Sadaie Y."/>
            <person name="Sato T."/>
            <person name="Scanlan E."/>
            <person name="Schleich S."/>
            <person name="Schroeter R."/>
            <person name="Scoffone F."/>
            <person name="Sekiguchi J."/>
            <person name="Sekowska A."/>
            <person name="Seror S.J."/>
            <person name="Serror P."/>
            <person name="Shin B.-S."/>
            <person name="Soldo B."/>
            <person name="Sorokin A."/>
            <person name="Tacconi E."/>
            <person name="Takagi T."/>
            <person name="Takahashi H."/>
            <person name="Takemaru K."/>
            <person name="Takeuchi M."/>
            <person name="Tamakoshi A."/>
            <person name="Tanaka T."/>
            <person name="Terpstra P."/>
            <person name="Tognoni A."/>
            <person name="Tosato V."/>
            <person name="Uchiyama S."/>
            <person name="Vandenbol M."/>
            <person name="Vannier F."/>
            <person name="Vassarotti A."/>
            <person name="Viari A."/>
            <person name="Wambutt R."/>
            <person name="Wedler E."/>
            <person name="Wedler H."/>
            <person name="Weitzenegger T."/>
            <person name="Winters P."/>
            <person name="Wipat A."/>
            <person name="Yamamoto H."/>
            <person name="Yamane K."/>
            <person name="Yasumoto K."/>
            <person name="Yata K."/>
            <person name="Yoshida K."/>
            <person name="Yoshikawa H.-F."/>
            <person name="Zumstein E."/>
            <person name="Yoshikawa H."/>
            <person name="Danchin A."/>
        </authorList>
    </citation>
    <scope>NUCLEOTIDE SEQUENCE [LARGE SCALE GENOMIC DNA]</scope>
    <source>
        <strain>168</strain>
    </source>
</reference>
<reference key="2">
    <citation type="journal article" date="2001" name="FEMS Microbiol. Lett.">
        <title>Functional analysis of the Bacillus subtilis cysK and cysJI genes.</title>
        <authorList>
            <person name="van der Ploeg J.R."/>
            <person name="Barone M."/>
            <person name="Leisinger T."/>
        </authorList>
    </citation>
    <scope>FUNCTION IN SULFATE ASSIMILATION</scope>
    <scope>DISRUPTION PHENOTYPE</scope>
    <scope>INDUCTION</scope>
    <source>
        <strain>168 / BGSC1A1</strain>
    </source>
</reference>
<reference key="3">
    <citation type="journal article" date="2002" name="J. Bacteriol.">
        <title>Identification of Bacillus subtilis CysL, a regulator of the cysJI operon, which encodes sulfite reductase.</title>
        <authorList>
            <person name="Guillouard I."/>
            <person name="Auger S."/>
            <person name="Hullo M.-F."/>
            <person name="Chetouani F."/>
            <person name="Danchin A."/>
            <person name="Martin-Verstraete I."/>
        </authorList>
    </citation>
    <scope>INDUCTION</scope>
    <source>
        <strain>168</strain>
    </source>
</reference>
<keyword id="KW-0004">4Fe-4S</keyword>
<keyword id="KW-0028">Amino-acid biosynthesis</keyword>
<keyword id="KW-0198">Cysteine biosynthesis</keyword>
<keyword id="KW-0349">Heme</keyword>
<keyword id="KW-0408">Iron</keyword>
<keyword id="KW-0411">Iron-sulfur</keyword>
<keyword id="KW-0479">Metal-binding</keyword>
<keyword id="KW-0521">NADP</keyword>
<keyword id="KW-0560">Oxidoreductase</keyword>
<keyword id="KW-1185">Reference proteome</keyword>
<feature type="chain" id="PRO_0000388478" description="Sulfite reductase [NADPH] hemoprotein beta-component">
    <location>
        <begin position="1"/>
        <end position="571"/>
    </location>
</feature>
<feature type="binding site" evidence="1">
    <location>
        <position position="436"/>
    </location>
    <ligand>
        <name>[4Fe-4S] cluster</name>
        <dbReference type="ChEBI" id="CHEBI:49883"/>
    </ligand>
</feature>
<feature type="binding site" evidence="1">
    <location>
        <position position="442"/>
    </location>
    <ligand>
        <name>[4Fe-4S] cluster</name>
        <dbReference type="ChEBI" id="CHEBI:49883"/>
    </ligand>
</feature>
<feature type="binding site" evidence="1">
    <location>
        <position position="481"/>
    </location>
    <ligand>
        <name>[4Fe-4S] cluster</name>
        <dbReference type="ChEBI" id="CHEBI:49883"/>
    </ligand>
</feature>
<feature type="binding site" evidence="1">
    <location>
        <position position="485"/>
    </location>
    <ligand>
        <name>[4Fe-4S] cluster</name>
        <dbReference type="ChEBI" id="CHEBI:49883"/>
    </ligand>
</feature>
<feature type="binding site" description="axial binding residue" evidence="1">
    <location>
        <position position="485"/>
    </location>
    <ligand>
        <name>siroheme</name>
        <dbReference type="ChEBI" id="CHEBI:60052"/>
    </ligand>
    <ligandPart>
        <name>Fe</name>
        <dbReference type="ChEBI" id="CHEBI:18248"/>
    </ligandPart>
</feature>
<accession>O32213</accession>